<organism>
    <name type="scientific">Pentadiplandra brazzeana</name>
    <dbReference type="NCBI Taxonomy" id="43545"/>
    <lineage>
        <taxon>Eukaryota</taxon>
        <taxon>Viridiplantae</taxon>
        <taxon>Streptophyta</taxon>
        <taxon>Embryophyta</taxon>
        <taxon>Tracheophyta</taxon>
        <taxon>Spermatophyta</taxon>
        <taxon>Magnoliopsida</taxon>
        <taxon>eudicotyledons</taxon>
        <taxon>Gunneridae</taxon>
        <taxon>Pentapetalae</taxon>
        <taxon>rosids</taxon>
        <taxon>malvids</taxon>
        <taxon>Brassicales</taxon>
        <taxon>Pentadiplandraceae</taxon>
        <taxon>Pentadiplandra</taxon>
    </lineage>
</organism>
<feature type="chain" id="PRO_0000221427" description="Defensin-like protein">
    <location>
        <begin position="1"/>
        <end position="54"/>
    </location>
</feature>
<feature type="modified residue" description="Pyrrolidone carboxylic acid" evidence="2">
    <location>
        <position position="1"/>
    </location>
</feature>
<feature type="disulfide bond">
    <location>
        <begin position="4"/>
        <end position="52"/>
    </location>
</feature>
<feature type="disulfide bond">
    <location>
        <begin position="16"/>
        <end position="37"/>
    </location>
</feature>
<feature type="disulfide bond">
    <location>
        <begin position="22"/>
        <end position="47"/>
    </location>
</feature>
<feature type="disulfide bond">
    <location>
        <begin position="26"/>
        <end position="49"/>
    </location>
</feature>
<feature type="strand" evidence="6">
    <location>
        <begin position="4"/>
        <end position="7"/>
    </location>
</feature>
<feature type="helix" evidence="6">
    <location>
        <begin position="13"/>
        <end position="17"/>
    </location>
</feature>
<feature type="helix" evidence="6">
    <location>
        <begin position="21"/>
        <end position="30"/>
    </location>
</feature>
<feature type="strand" evidence="6">
    <location>
        <begin position="33"/>
        <end position="39"/>
    </location>
</feature>
<feature type="strand" evidence="5">
    <location>
        <begin position="41"/>
        <end position="43"/>
    </location>
</feature>
<feature type="strand" evidence="6">
    <location>
        <begin position="45"/>
        <end position="50"/>
    </location>
</feature>
<dbReference type="PIR" id="S51208">
    <property type="entry name" value="S51208"/>
</dbReference>
<dbReference type="PDB" id="1BRZ">
    <property type="method" value="NMR"/>
    <property type="chains" value="A=2-54"/>
</dbReference>
<dbReference type="PDB" id="2BRZ">
    <property type="method" value="NMR"/>
    <property type="chains" value="A=2-54"/>
</dbReference>
<dbReference type="PDB" id="2KGQ">
    <property type="method" value="NMR"/>
    <property type="chains" value="A=2-54"/>
</dbReference>
<dbReference type="PDB" id="2KYQ">
    <property type="method" value="NMR"/>
    <property type="chains" value="A=3-54"/>
</dbReference>
<dbReference type="PDB" id="2LY5">
    <property type="method" value="NMR"/>
    <property type="chains" value="A=2-54"/>
</dbReference>
<dbReference type="PDB" id="2LY6">
    <property type="method" value="NMR"/>
    <property type="chains" value="A=2-54"/>
</dbReference>
<dbReference type="PDB" id="2N66">
    <property type="method" value="NMR"/>
    <property type="chains" value="A=1-54"/>
</dbReference>
<dbReference type="PDB" id="2N69">
    <property type="method" value="NMR"/>
    <property type="chains" value="A=1-54"/>
</dbReference>
<dbReference type="PDB" id="4HE7">
    <property type="method" value="X-ray"/>
    <property type="resolution" value="1.80 A"/>
    <property type="chains" value="A=1-54"/>
</dbReference>
<dbReference type="PDB" id="7W8E">
    <property type="method" value="X-ray"/>
    <property type="resolution" value="1.34 A"/>
    <property type="chains" value="A=1-54"/>
</dbReference>
<dbReference type="PDB" id="7W8H">
    <property type="method" value="X-ray"/>
    <property type="resolution" value="1.50 A"/>
    <property type="chains" value="A/B/C/D/E/F/G/H=1-54"/>
</dbReference>
<dbReference type="PDBsum" id="1BRZ"/>
<dbReference type="PDBsum" id="2BRZ"/>
<dbReference type="PDBsum" id="2KGQ"/>
<dbReference type="PDBsum" id="2KYQ"/>
<dbReference type="PDBsum" id="2LY5"/>
<dbReference type="PDBsum" id="2LY6"/>
<dbReference type="PDBsum" id="2N66"/>
<dbReference type="PDBsum" id="2N69"/>
<dbReference type="PDBsum" id="4HE7"/>
<dbReference type="PDBsum" id="7W8E"/>
<dbReference type="PDBsum" id="7W8H"/>
<dbReference type="BMRB" id="P56552"/>
<dbReference type="SMR" id="P56552"/>
<dbReference type="TCDB" id="1.C.45.4.2">
    <property type="family name" value="the plant defensin (plant defensin) family"/>
</dbReference>
<dbReference type="EvolutionaryTrace" id="P56552"/>
<dbReference type="GO" id="GO:0005576">
    <property type="term" value="C:extracellular region"/>
    <property type="evidence" value="ECO:0007669"/>
    <property type="project" value="UniProtKB-SubCell"/>
</dbReference>
<dbReference type="GO" id="GO:0042742">
    <property type="term" value="P:defense response to bacterium"/>
    <property type="evidence" value="ECO:0007669"/>
    <property type="project" value="UniProtKB-KW"/>
</dbReference>
<dbReference type="GO" id="GO:0050832">
    <property type="term" value="P:defense response to fungus"/>
    <property type="evidence" value="ECO:0007669"/>
    <property type="project" value="UniProtKB-KW"/>
</dbReference>
<dbReference type="GO" id="GO:0031640">
    <property type="term" value="P:killing of cells of another organism"/>
    <property type="evidence" value="ECO:0007669"/>
    <property type="project" value="UniProtKB-KW"/>
</dbReference>
<dbReference type="Gene3D" id="3.30.30.10">
    <property type="entry name" value="Knottin, scorpion toxin-like"/>
    <property type="match status" value="1"/>
</dbReference>
<dbReference type="InterPro" id="IPR036574">
    <property type="entry name" value="Scorpion_toxin-like_sf"/>
</dbReference>
<dbReference type="SUPFAM" id="SSF57095">
    <property type="entry name" value="Scorpion toxin-like"/>
    <property type="match status" value="1"/>
</dbReference>
<sequence length="54" mass="6498">QDKCKKVYENYPVSKCQLANQCNYDCKLDKHARSGECFYDEKRNLQCICDYCEY</sequence>
<name>DEF_PENBA</name>
<accession>P56552</accession>
<protein>
    <recommendedName>
        <fullName>Defensin-like protein</fullName>
    </recommendedName>
    <alternativeName>
        <fullName evidence="3">Brazzein</fullName>
    </alternativeName>
</protein>
<proteinExistence type="evidence at protein level"/>
<keyword id="KW-0002">3D-structure</keyword>
<keyword id="KW-0044">Antibiotic</keyword>
<keyword id="KW-0929">Antimicrobial</keyword>
<keyword id="KW-0903">Direct protein sequencing</keyword>
<keyword id="KW-1015">Disulfide bond</keyword>
<keyword id="KW-0295">Fungicide</keyword>
<keyword id="KW-0873">Pyrrolidone carboxylic acid</keyword>
<keyword id="KW-0964">Secreted</keyword>
<keyword id="KW-0776">Taste-modifying protein</keyword>
<reference key="1">
    <citation type="journal article" date="1994" name="FEBS Lett.">
        <title>Brazzein, a new high-potency thermostable sweet protein from Pentadiplandra brazzeana B.</title>
        <authorList>
            <person name="Ming D."/>
            <person name="Hellekant G."/>
        </authorList>
    </citation>
    <scope>PROTEIN SEQUENCE</scope>
    <scope>PYROGLUTAMATE FORMATION AT GLN-1</scope>
    <source>
        <tissue>Fruit</tissue>
    </source>
</reference>
<reference key="2">
    <citation type="journal article" date="2004" name="Proc. Natl. Acad. Sci. U.S.A.">
        <title>Multidimensional signatures in antimicrobial peptides.</title>
        <authorList>
            <person name="Yount N.Y."/>
            <person name="Yeaman M.R."/>
        </authorList>
    </citation>
    <scope>FUNCTION</scope>
</reference>
<reference key="3">
    <citation type="journal article" date="1998" name="Nat. Struct. Biol.">
        <title>Solution structure of the thermostable sweet-tasting protein brazzein.</title>
        <authorList>
            <person name="Caldwell J.E."/>
            <person name="Abildgaard F."/>
            <person name="Dzakula Z."/>
            <person name="Ming D."/>
            <person name="Hellekant G."/>
            <person name="Markley J.L."/>
        </authorList>
    </citation>
    <scope>STRUCTURE BY NMR</scope>
</reference>
<evidence type="ECO:0000269" key="1">
    <source>
    </source>
</evidence>
<evidence type="ECO:0000269" key="2">
    <source>
    </source>
</evidence>
<evidence type="ECO:0000303" key="3">
    <source>
    </source>
</evidence>
<evidence type="ECO:0000305" key="4"/>
<evidence type="ECO:0007829" key="5">
    <source>
        <dbReference type="PDB" id="2BRZ"/>
    </source>
</evidence>
<evidence type="ECO:0007829" key="6">
    <source>
        <dbReference type="PDB" id="7W8E"/>
    </source>
</evidence>
<comment type="function">
    <text evidence="1">Taste-modifying protein; sweet-tasting. It is 2000 sweeter than sucrose on a molar basis.</text>
</comment>
<comment type="function">
    <text evidence="1">Has a pH-specific antimicrobial activity against bacteria (B.subtilis, E.coli and S.aureus) and the fungus C.albicans.</text>
</comment>
<comment type="subunit">
    <text>Monomer.</text>
</comment>
<comment type="subcellular location">
    <subcellularLocation>
        <location>Secreted</location>
    </subcellularLocation>
</comment>
<comment type="similarity">
    <text evidence="4">Belongs to the DEFL family.</text>
</comment>